<evidence type="ECO:0000255" key="1">
    <source>
        <dbReference type="HAMAP-Rule" id="MF_00237"/>
    </source>
</evidence>
<evidence type="ECO:0000256" key="2">
    <source>
        <dbReference type="SAM" id="MobiDB-lite"/>
    </source>
</evidence>
<dbReference type="EMBL" id="CP000668">
    <property type="protein sequence ID" value="ABP41747.1"/>
    <property type="molecule type" value="Genomic_DNA"/>
</dbReference>
<dbReference type="RefSeq" id="WP_002211537.1">
    <property type="nucleotide sequence ID" value="NZ_CP009715.1"/>
</dbReference>
<dbReference type="SMR" id="A4TR35"/>
<dbReference type="GeneID" id="57974931"/>
<dbReference type="KEGG" id="ypp:YPDSF_3394"/>
<dbReference type="PATRIC" id="fig|386656.14.peg.934"/>
<dbReference type="GO" id="GO:0033281">
    <property type="term" value="C:TAT protein transport complex"/>
    <property type="evidence" value="ECO:0007669"/>
    <property type="project" value="UniProtKB-UniRule"/>
</dbReference>
<dbReference type="GO" id="GO:0008320">
    <property type="term" value="F:protein transmembrane transporter activity"/>
    <property type="evidence" value="ECO:0007669"/>
    <property type="project" value="UniProtKB-UniRule"/>
</dbReference>
<dbReference type="GO" id="GO:0043953">
    <property type="term" value="P:protein transport by the Tat complex"/>
    <property type="evidence" value="ECO:0007669"/>
    <property type="project" value="UniProtKB-UniRule"/>
</dbReference>
<dbReference type="Gene3D" id="1.20.5.3310">
    <property type="match status" value="1"/>
</dbReference>
<dbReference type="HAMAP" id="MF_00237">
    <property type="entry name" value="TatB"/>
    <property type="match status" value="1"/>
</dbReference>
<dbReference type="InterPro" id="IPR018448">
    <property type="entry name" value="TatB"/>
</dbReference>
<dbReference type="NCBIfam" id="TIGR01410">
    <property type="entry name" value="tatB"/>
    <property type="match status" value="1"/>
</dbReference>
<dbReference type="PANTHER" id="PTHR33162">
    <property type="entry name" value="SEC-INDEPENDENT PROTEIN TRANSLOCASE PROTEIN TATA, CHLOROPLASTIC"/>
    <property type="match status" value="1"/>
</dbReference>
<dbReference type="PANTHER" id="PTHR33162:SF1">
    <property type="entry name" value="SEC-INDEPENDENT PROTEIN TRANSLOCASE PROTEIN TATA, CHLOROPLASTIC"/>
    <property type="match status" value="1"/>
</dbReference>
<dbReference type="PRINTS" id="PR01506">
    <property type="entry name" value="TATBPROTEIN"/>
</dbReference>
<name>TATB_YERPP</name>
<keyword id="KW-0997">Cell inner membrane</keyword>
<keyword id="KW-1003">Cell membrane</keyword>
<keyword id="KW-0472">Membrane</keyword>
<keyword id="KW-0653">Protein transport</keyword>
<keyword id="KW-0811">Translocation</keyword>
<keyword id="KW-0812">Transmembrane</keyword>
<keyword id="KW-1133">Transmembrane helix</keyword>
<keyword id="KW-0813">Transport</keyword>
<sequence length="220" mass="23279">MFDIGFSELLLVLVIGLVVLGPERLPVAVRTVSGWIRTLRSLAATVQNELAQELKLQELQDSLKKVEQAGLQNLTPELKASMDELKEAAEALKRSYHVDAGSEAPHTIHNPLVTEPEAIHDGVTPAEPATQVSALAQAPNILEAGTASVVDSVVEAAPVTTVKSVVQGEVLVKSTPVQEVGLADVMDKPVTKQQIDTIDSHGTDLSSAGPSRIHQPGGDQ</sequence>
<protein>
    <recommendedName>
        <fullName evidence="1">Sec-independent protein translocase protein TatB</fullName>
    </recommendedName>
</protein>
<organism>
    <name type="scientific">Yersinia pestis (strain Pestoides F)</name>
    <dbReference type="NCBI Taxonomy" id="386656"/>
    <lineage>
        <taxon>Bacteria</taxon>
        <taxon>Pseudomonadati</taxon>
        <taxon>Pseudomonadota</taxon>
        <taxon>Gammaproteobacteria</taxon>
        <taxon>Enterobacterales</taxon>
        <taxon>Yersiniaceae</taxon>
        <taxon>Yersinia</taxon>
    </lineage>
</organism>
<comment type="function">
    <text evidence="1">Part of the twin-arginine translocation (Tat) system that transports large folded proteins containing a characteristic twin-arginine motif in their signal peptide across membranes. Together with TatC, TatB is part of a receptor directly interacting with Tat signal peptides. TatB may form an oligomeric binding site that transiently accommodates folded Tat precursor proteins before their translocation.</text>
</comment>
<comment type="subunit">
    <text evidence="1">The Tat system comprises two distinct complexes: a TatABC complex, containing multiple copies of TatA, TatB and TatC subunits, and a separate TatA complex, containing only TatA subunits. Substrates initially bind to the TatABC complex, which probably triggers association of the separate TatA complex to form the active translocon.</text>
</comment>
<comment type="subcellular location">
    <subcellularLocation>
        <location evidence="1">Cell inner membrane</location>
        <topology evidence="1">Single-pass membrane protein</topology>
    </subcellularLocation>
</comment>
<comment type="similarity">
    <text evidence="1">Belongs to the TatB family.</text>
</comment>
<proteinExistence type="inferred from homology"/>
<feature type="chain" id="PRO_0000301254" description="Sec-independent protein translocase protein TatB">
    <location>
        <begin position="1"/>
        <end position="220"/>
    </location>
</feature>
<feature type="transmembrane region" description="Helical" evidence="1">
    <location>
        <begin position="1"/>
        <end position="21"/>
    </location>
</feature>
<feature type="region of interest" description="Disordered" evidence="2">
    <location>
        <begin position="192"/>
        <end position="220"/>
    </location>
</feature>
<reference key="1">
    <citation type="submission" date="2007-02" db="EMBL/GenBank/DDBJ databases">
        <title>Complete sequence of chromosome of Yersinia pestis Pestoides F.</title>
        <authorList>
            <consortium name="US DOE Joint Genome Institute"/>
            <person name="Copeland A."/>
            <person name="Lucas S."/>
            <person name="Lapidus A."/>
            <person name="Barry K."/>
            <person name="Detter J.C."/>
            <person name="Glavina del Rio T."/>
            <person name="Hammon N."/>
            <person name="Israni S."/>
            <person name="Dalin E."/>
            <person name="Tice H."/>
            <person name="Pitluck S."/>
            <person name="Di Bartolo G."/>
            <person name="Chain P."/>
            <person name="Malfatti S."/>
            <person name="Shin M."/>
            <person name="Vergez L."/>
            <person name="Schmutz J."/>
            <person name="Larimer F."/>
            <person name="Land M."/>
            <person name="Hauser L."/>
            <person name="Worsham P."/>
            <person name="Chu M."/>
            <person name="Bearden S."/>
            <person name="Garcia E."/>
            <person name="Richardson P."/>
        </authorList>
    </citation>
    <scope>NUCLEOTIDE SEQUENCE [LARGE SCALE GENOMIC DNA]</scope>
    <source>
        <strain>Pestoides F</strain>
    </source>
</reference>
<accession>A4TR35</accession>
<gene>
    <name evidence="1" type="primary">tatB</name>
    <name type="ordered locus">YPDSF_3394</name>
</gene>